<feature type="chain" id="PRO_0000199899" description="Sulfite reductase [NADPH] hemoprotein beta-component">
    <location>
        <begin position="1"/>
        <end position="577"/>
    </location>
</feature>
<feature type="binding site" evidence="1">
    <location>
        <position position="441"/>
    </location>
    <ligand>
        <name>[4Fe-4S] cluster</name>
        <dbReference type="ChEBI" id="CHEBI:49883"/>
    </ligand>
</feature>
<feature type="binding site" evidence="1">
    <location>
        <position position="447"/>
    </location>
    <ligand>
        <name>[4Fe-4S] cluster</name>
        <dbReference type="ChEBI" id="CHEBI:49883"/>
    </ligand>
</feature>
<feature type="binding site" evidence="1">
    <location>
        <position position="486"/>
    </location>
    <ligand>
        <name>[4Fe-4S] cluster</name>
        <dbReference type="ChEBI" id="CHEBI:49883"/>
    </ligand>
</feature>
<feature type="binding site" evidence="1">
    <location>
        <position position="490"/>
    </location>
    <ligand>
        <name>[4Fe-4S] cluster</name>
        <dbReference type="ChEBI" id="CHEBI:49883"/>
    </ligand>
</feature>
<feature type="binding site" description="axial binding residue" evidence="1">
    <location>
        <position position="490"/>
    </location>
    <ligand>
        <name>siroheme</name>
        <dbReference type="ChEBI" id="CHEBI:60052"/>
    </ligand>
    <ligandPart>
        <name>Fe</name>
        <dbReference type="ChEBI" id="CHEBI:18248"/>
    </ligandPart>
</feature>
<gene>
    <name evidence="1" type="primary">cysI</name>
    <name type="ordered locus">ECA3546</name>
</gene>
<comment type="function">
    <text evidence="1">Component of the sulfite reductase complex that catalyzes the 6-electron reduction of sulfite to sulfide. This is one of several activities required for the biosynthesis of L-cysteine from sulfate.</text>
</comment>
<comment type="catalytic activity">
    <reaction evidence="1">
        <text>hydrogen sulfide + 3 NADP(+) + 3 H2O = sulfite + 3 NADPH + 4 H(+)</text>
        <dbReference type="Rhea" id="RHEA:13801"/>
        <dbReference type="ChEBI" id="CHEBI:15377"/>
        <dbReference type="ChEBI" id="CHEBI:15378"/>
        <dbReference type="ChEBI" id="CHEBI:17359"/>
        <dbReference type="ChEBI" id="CHEBI:29919"/>
        <dbReference type="ChEBI" id="CHEBI:57783"/>
        <dbReference type="ChEBI" id="CHEBI:58349"/>
        <dbReference type="EC" id="1.8.1.2"/>
    </reaction>
</comment>
<comment type="cofactor">
    <cofactor evidence="1">
        <name>siroheme</name>
        <dbReference type="ChEBI" id="CHEBI:60052"/>
    </cofactor>
    <text evidence="1">Binds 1 siroheme per subunit.</text>
</comment>
<comment type="cofactor">
    <cofactor evidence="1">
        <name>[4Fe-4S] cluster</name>
        <dbReference type="ChEBI" id="CHEBI:49883"/>
    </cofactor>
    <text evidence="1">Binds 1 [4Fe-4S] cluster per subunit.</text>
</comment>
<comment type="pathway">
    <text evidence="1">Sulfur metabolism; hydrogen sulfide biosynthesis; hydrogen sulfide from sulfite (NADPH route): step 1/1.</text>
</comment>
<comment type="subunit">
    <text evidence="1">Alpha(8)-beta(8). The alpha component is a flavoprotein, the beta component is a hemoprotein.</text>
</comment>
<comment type="similarity">
    <text evidence="1">Belongs to the nitrite and sulfite reductase 4Fe-4S domain family.</text>
</comment>
<keyword id="KW-0004">4Fe-4S</keyword>
<keyword id="KW-0028">Amino-acid biosynthesis</keyword>
<keyword id="KW-0198">Cysteine biosynthesis</keyword>
<keyword id="KW-0349">Heme</keyword>
<keyword id="KW-0408">Iron</keyword>
<keyword id="KW-0411">Iron-sulfur</keyword>
<keyword id="KW-0479">Metal-binding</keyword>
<keyword id="KW-0521">NADP</keyword>
<keyword id="KW-0560">Oxidoreductase</keyword>
<keyword id="KW-1185">Reference proteome</keyword>
<protein>
    <recommendedName>
        <fullName evidence="1">Sulfite reductase [NADPH] hemoprotein beta-component</fullName>
        <shortName evidence="1">SiR-HP</shortName>
        <shortName evidence="1">SiRHP</shortName>
        <ecNumber evidence="1">1.8.1.2</ecNumber>
    </recommendedName>
</protein>
<evidence type="ECO:0000255" key="1">
    <source>
        <dbReference type="HAMAP-Rule" id="MF_01540"/>
    </source>
</evidence>
<dbReference type="EC" id="1.8.1.2" evidence="1"/>
<dbReference type="EMBL" id="BX950851">
    <property type="protein sequence ID" value="CAG76444.1"/>
    <property type="molecule type" value="Genomic_DNA"/>
</dbReference>
<dbReference type="RefSeq" id="WP_011095049.1">
    <property type="nucleotide sequence ID" value="NC_004547.2"/>
</dbReference>
<dbReference type="SMR" id="Q6D1A2"/>
<dbReference type="STRING" id="218491.ECA3546"/>
<dbReference type="KEGG" id="eca:ECA3546"/>
<dbReference type="PATRIC" id="fig|218491.5.peg.3593"/>
<dbReference type="eggNOG" id="COG0155">
    <property type="taxonomic scope" value="Bacteria"/>
</dbReference>
<dbReference type="HOGENOM" id="CLU_001975_3_2_6"/>
<dbReference type="OrthoDB" id="3189055at2"/>
<dbReference type="UniPathway" id="UPA00140">
    <property type="reaction ID" value="UER00207"/>
</dbReference>
<dbReference type="Proteomes" id="UP000007966">
    <property type="component" value="Chromosome"/>
</dbReference>
<dbReference type="GO" id="GO:0009337">
    <property type="term" value="C:sulfite reductase complex (NADPH)"/>
    <property type="evidence" value="ECO:0007669"/>
    <property type="project" value="InterPro"/>
</dbReference>
<dbReference type="GO" id="GO:0051539">
    <property type="term" value="F:4 iron, 4 sulfur cluster binding"/>
    <property type="evidence" value="ECO:0007669"/>
    <property type="project" value="UniProtKB-KW"/>
</dbReference>
<dbReference type="GO" id="GO:0020037">
    <property type="term" value="F:heme binding"/>
    <property type="evidence" value="ECO:0007669"/>
    <property type="project" value="InterPro"/>
</dbReference>
<dbReference type="GO" id="GO:0046872">
    <property type="term" value="F:metal ion binding"/>
    <property type="evidence" value="ECO:0007669"/>
    <property type="project" value="UniProtKB-KW"/>
</dbReference>
<dbReference type="GO" id="GO:0050661">
    <property type="term" value="F:NADP binding"/>
    <property type="evidence" value="ECO:0007669"/>
    <property type="project" value="InterPro"/>
</dbReference>
<dbReference type="GO" id="GO:0050311">
    <property type="term" value="F:sulfite reductase (ferredoxin) activity"/>
    <property type="evidence" value="ECO:0007669"/>
    <property type="project" value="TreeGrafter"/>
</dbReference>
<dbReference type="GO" id="GO:0004783">
    <property type="term" value="F:sulfite reductase (NADPH) activity"/>
    <property type="evidence" value="ECO:0007669"/>
    <property type="project" value="UniProtKB-UniRule"/>
</dbReference>
<dbReference type="GO" id="GO:0019344">
    <property type="term" value="P:cysteine biosynthetic process"/>
    <property type="evidence" value="ECO:0007669"/>
    <property type="project" value="UniProtKB-KW"/>
</dbReference>
<dbReference type="GO" id="GO:0070814">
    <property type="term" value="P:hydrogen sulfide biosynthetic process"/>
    <property type="evidence" value="ECO:0007669"/>
    <property type="project" value="UniProtKB-UniRule"/>
</dbReference>
<dbReference type="GO" id="GO:0000103">
    <property type="term" value="P:sulfate assimilation"/>
    <property type="evidence" value="ECO:0007669"/>
    <property type="project" value="UniProtKB-UniRule"/>
</dbReference>
<dbReference type="FunFam" id="3.30.413.10:FF:000003">
    <property type="entry name" value="Sulfite reductase [NADPH] hemoprotein beta-component"/>
    <property type="match status" value="1"/>
</dbReference>
<dbReference type="FunFam" id="3.30.413.10:FF:000004">
    <property type="entry name" value="Sulfite reductase [NADPH] hemoprotein beta-component"/>
    <property type="match status" value="1"/>
</dbReference>
<dbReference type="Gene3D" id="3.30.413.10">
    <property type="entry name" value="Sulfite Reductase Hemoprotein, domain 1"/>
    <property type="match status" value="2"/>
</dbReference>
<dbReference type="HAMAP" id="MF_01540">
    <property type="entry name" value="CysI"/>
    <property type="match status" value="1"/>
</dbReference>
<dbReference type="InterPro" id="IPR011786">
    <property type="entry name" value="CysI"/>
</dbReference>
<dbReference type="InterPro" id="IPR005117">
    <property type="entry name" value="NiRdtase/SiRdtase_haem-b_fer"/>
</dbReference>
<dbReference type="InterPro" id="IPR036136">
    <property type="entry name" value="Nit/Sulf_reduc_fer-like_dom_sf"/>
</dbReference>
<dbReference type="InterPro" id="IPR006067">
    <property type="entry name" value="NO2/SO3_Rdtase_4Fe4S_dom"/>
</dbReference>
<dbReference type="InterPro" id="IPR045169">
    <property type="entry name" value="NO2/SO3_Rdtase_4Fe4S_prot"/>
</dbReference>
<dbReference type="InterPro" id="IPR045854">
    <property type="entry name" value="NO2/SO3_Rdtase_4Fe4S_sf"/>
</dbReference>
<dbReference type="InterPro" id="IPR006066">
    <property type="entry name" value="NO2/SO3_Rdtase_FeS/sirohaem_BS"/>
</dbReference>
<dbReference type="NCBIfam" id="TIGR02041">
    <property type="entry name" value="CysI"/>
    <property type="match status" value="1"/>
</dbReference>
<dbReference type="NCBIfam" id="NF010029">
    <property type="entry name" value="PRK13504.1"/>
    <property type="match status" value="1"/>
</dbReference>
<dbReference type="PANTHER" id="PTHR11493:SF47">
    <property type="entry name" value="SULFITE REDUCTASE [NADPH] SUBUNIT BETA"/>
    <property type="match status" value="1"/>
</dbReference>
<dbReference type="PANTHER" id="PTHR11493">
    <property type="entry name" value="SULFITE REDUCTASE [NADPH] SUBUNIT BETA-RELATED"/>
    <property type="match status" value="1"/>
</dbReference>
<dbReference type="Pfam" id="PF01077">
    <property type="entry name" value="NIR_SIR"/>
    <property type="match status" value="1"/>
</dbReference>
<dbReference type="Pfam" id="PF03460">
    <property type="entry name" value="NIR_SIR_ferr"/>
    <property type="match status" value="2"/>
</dbReference>
<dbReference type="PRINTS" id="PR00397">
    <property type="entry name" value="SIROHAEM"/>
</dbReference>
<dbReference type="SUPFAM" id="SSF56014">
    <property type="entry name" value="Nitrite and sulphite reductase 4Fe-4S domain-like"/>
    <property type="match status" value="2"/>
</dbReference>
<dbReference type="SUPFAM" id="SSF55124">
    <property type="entry name" value="Nitrite/Sulfite reductase N-terminal domain-like"/>
    <property type="match status" value="2"/>
</dbReference>
<dbReference type="PROSITE" id="PS00365">
    <property type="entry name" value="NIR_SIR"/>
    <property type="match status" value="1"/>
</dbReference>
<accession>Q6D1A2</accession>
<organism>
    <name type="scientific">Pectobacterium atrosepticum (strain SCRI 1043 / ATCC BAA-672)</name>
    <name type="common">Erwinia carotovora subsp. atroseptica</name>
    <dbReference type="NCBI Taxonomy" id="218491"/>
    <lineage>
        <taxon>Bacteria</taxon>
        <taxon>Pseudomonadati</taxon>
        <taxon>Pseudomonadota</taxon>
        <taxon>Gammaproteobacteria</taxon>
        <taxon>Enterobacterales</taxon>
        <taxon>Pectobacteriaceae</taxon>
        <taxon>Pectobacterium</taxon>
    </lineage>
</organism>
<sequence>MSEKYVFSEKHPGPLVVEGKLTDAERMKTESNFLRGTIAEDLNDGLTGGFKGDNFLLIRFHGMYQQDDRDIRAERAEQKLEPRHAMLLRCRLPGGVMTPQQWLRIDKFAGENTIYGSIRITNRQTFQYHGILKSNVKPVHQMLNSIGLDALATANDMNRNVLCTSNPIESELHQQAYEWAKTISEHLLPRTRAYAEIWMDQEKVATTDEEPILGSTYLPRKFKTTVVVPPQNDVDLHANDLNFVAIADNGRLVGFNVLVGGGLSIAHGDKETYPRTASELGYISIEHTLAIAEAVVTTQRDWGNRTNRKNAKTKYTLERVGVDNFKQEVEARAGVKFEAVRPYEFTERGDRIGWVKGIDNKWHLTLFIENGRILDYPGRPLKTGLAEIAKIHKGDFRLTANQNLIVAGVPARSKAKIDALAREHGLIDDSVSEQRKNSMACVSFPTCPLAMAEAERFLPEFVTKVEGIMQQHGVGDEHIVLRVTGCPNGCGRSMLAEIGLVGKAMGRYNLHLGGNREGTRIPRMYRENINETEILAEIDRLVGLWAQDRLQNEGFGDFVIRTNIIRPVLDPARDFYD</sequence>
<proteinExistence type="inferred from homology"/>
<reference key="1">
    <citation type="journal article" date="2004" name="Proc. Natl. Acad. Sci. U.S.A.">
        <title>Genome sequence of the enterobacterial phytopathogen Erwinia carotovora subsp. atroseptica and characterization of virulence factors.</title>
        <authorList>
            <person name="Bell K.S."/>
            <person name="Sebaihia M."/>
            <person name="Pritchard L."/>
            <person name="Holden M.T.G."/>
            <person name="Hyman L.J."/>
            <person name="Holeva M.C."/>
            <person name="Thomson N.R."/>
            <person name="Bentley S.D."/>
            <person name="Churcher L.J.C."/>
            <person name="Mungall K."/>
            <person name="Atkin R."/>
            <person name="Bason N."/>
            <person name="Brooks K."/>
            <person name="Chillingworth T."/>
            <person name="Clark K."/>
            <person name="Doggett J."/>
            <person name="Fraser A."/>
            <person name="Hance Z."/>
            <person name="Hauser H."/>
            <person name="Jagels K."/>
            <person name="Moule S."/>
            <person name="Norbertczak H."/>
            <person name="Ormond D."/>
            <person name="Price C."/>
            <person name="Quail M.A."/>
            <person name="Sanders M."/>
            <person name="Walker D."/>
            <person name="Whitehead S."/>
            <person name="Salmond G.P.C."/>
            <person name="Birch P.R.J."/>
            <person name="Parkhill J."/>
            <person name="Toth I.K."/>
        </authorList>
    </citation>
    <scope>NUCLEOTIDE SEQUENCE [LARGE SCALE GENOMIC DNA]</scope>
    <source>
        <strain>SCRI 1043 / ATCC BAA-672</strain>
    </source>
</reference>
<name>CYSI_PECAS</name>